<keyword id="KW-0227">DNA damage</keyword>
<keyword id="KW-0233">DNA recombination</keyword>
<keyword id="KW-0234">DNA repair</keyword>
<keyword id="KW-0479">Metal-binding</keyword>
<keyword id="KW-0862">Zinc</keyword>
<keyword id="KW-0863">Zinc-finger</keyword>
<evidence type="ECO:0000255" key="1">
    <source>
        <dbReference type="HAMAP-Rule" id="MF_00017"/>
    </source>
</evidence>
<gene>
    <name evidence="1" type="primary">recR</name>
    <name type="ordered locus">Bamb_1763</name>
</gene>
<name>RECR_BURCM</name>
<feature type="chain" id="PRO_0000322869" description="Recombination protein RecR">
    <location>
        <begin position="1"/>
        <end position="198"/>
    </location>
</feature>
<feature type="domain" description="Toprim" evidence="1">
    <location>
        <begin position="80"/>
        <end position="175"/>
    </location>
</feature>
<feature type="zinc finger region" description="C4-type" evidence="1">
    <location>
        <begin position="57"/>
        <end position="72"/>
    </location>
</feature>
<dbReference type="EMBL" id="CP000440">
    <property type="protein sequence ID" value="ABI87319.1"/>
    <property type="molecule type" value="Genomic_DNA"/>
</dbReference>
<dbReference type="RefSeq" id="WP_006755697.1">
    <property type="nucleotide sequence ID" value="NZ_CP009798.1"/>
</dbReference>
<dbReference type="SMR" id="Q0BEV4"/>
<dbReference type="GeneID" id="93086030"/>
<dbReference type="KEGG" id="bam:Bamb_1763"/>
<dbReference type="PATRIC" id="fig|339670.21.peg.3196"/>
<dbReference type="eggNOG" id="COG0353">
    <property type="taxonomic scope" value="Bacteria"/>
</dbReference>
<dbReference type="Proteomes" id="UP000000662">
    <property type="component" value="Chromosome 1"/>
</dbReference>
<dbReference type="GO" id="GO:0003677">
    <property type="term" value="F:DNA binding"/>
    <property type="evidence" value="ECO:0007669"/>
    <property type="project" value="UniProtKB-UniRule"/>
</dbReference>
<dbReference type="GO" id="GO:0008270">
    <property type="term" value="F:zinc ion binding"/>
    <property type="evidence" value="ECO:0007669"/>
    <property type="project" value="UniProtKB-KW"/>
</dbReference>
<dbReference type="GO" id="GO:0006310">
    <property type="term" value="P:DNA recombination"/>
    <property type="evidence" value="ECO:0007669"/>
    <property type="project" value="UniProtKB-UniRule"/>
</dbReference>
<dbReference type="GO" id="GO:0006281">
    <property type="term" value="P:DNA repair"/>
    <property type="evidence" value="ECO:0007669"/>
    <property type="project" value="UniProtKB-UniRule"/>
</dbReference>
<dbReference type="CDD" id="cd01025">
    <property type="entry name" value="TOPRIM_recR"/>
    <property type="match status" value="1"/>
</dbReference>
<dbReference type="Gene3D" id="3.40.1360.10">
    <property type="match status" value="1"/>
</dbReference>
<dbReference type="Gene3D" id="6.10.250.240">
    <property type="match status" value="1"/>
</dbReference>
<dbReference type="Gene3D" id="1.10.8.420">
    <property type="entry name" value="RecR Domain 1"/>
    <property type="match status" value="1"/>
</dbReference>
<dbReference type="HAMAP" id="MF_00017">
    <property type="entry name" value="RecR"/>
    <property type="match status" value="1"/>
</dbReference>
<dbReference type="InterPro" id="IPR000093">
    <property type="entry name" value="DNA_Rcmb_RecR"/>
</dbReference>
<dbReference type="InterPro" id="IPR023627">
    <property type="entry name" value="Rcmb_RecR"/>
</dbReference>
<dbReference type="InterPro" id="IPR015967">
    <property type="entry name" value="Rcmb_RecR_Znf"/>
</dbReference>
<dbReference type="InterPro" id="IPR006171">
    <property type="entry name" value="TOPRIM_dom"/>
</dbReference>
<dbReference type="InterPro" id="IPR034137">
    <property type="entry name" value="TOPRIM_RecR"/>
</dbReference>
<dbReference type="NCBIfam" id="TIGR00615">
    <property type="entry name" value="recR"/>
    <property type="match status" value="1"/>
</dbReference>
<dbReference type="PANTHER" id="PTHR30446">
    <property type="entry name" value="RECOMBINATION PROTEIN RECR"/>
    <property type="match status" value="1"/>
</dbReference>
<dbReference type="PANTHER" id="PTHR30446:SF0">
    <property type="entry name" value="RECOMBINATION PROTEIN RECR"/>
    <property type="match status" value="1"/>
</dbReference>
<dbReference type="Pfam" id="PF21175">
    <property type="entry name" value="RecR_C"/>
    <property type="match status" value="1"/>
</dbReference>
<dbReference type="Pfam" id="PF21176">
    <property type="entry name" value="RecR_HhH"/>
    <property type="match status" value="1"/>
</dbReference>
<dbReference type="Pfam" id="PF02132">
    <property type="entry name" value="RecR_ZnF"/>
    <property type="match status" value="1"/>
</dbReference>
<dbReference type="Pfam" id="PF13662">
    <property type="entry name" value="Toprim_4"/>
    <property type="match status" value="1"/>
</dbReference>
<dbReference type="SMART" id="SM00493">
    <property type="entry name" value="TOPRIM"/>
    <property type="match status" value="1"/>
</dbReference>
<dbReference type="SUPFAM" id="SSF111304">
    <property type="entry name" value="Recombination protein RecR"/>
    <property type="match status" value="1"/>
</dbReference>
<dbReference type="PROSITE" id="PS01300">
    <property type="entry name" value="RECR"/>
    <property type="match status" value="1"/>
</dbReference>
<dbReference type="PROSITE" id="PS50880">
    <property type="entry name" value="TOPRIM"/>
    <property type="match status" value="1"/>
</dbReference>
<sequence>MKQPSALSALVEALRVLPGVGPKSAQRMAYHLMQHDREGAERLGRSLLFATEHLQHCEKCNTFTEAQICEVCSDDERDPTLLCVVETPADQIMLEQTMTYRGLYFVLMGRLSPLDGIGPKEIHFDRLVRRASDGVVKEVVLATNFTNEGEATAHYLGQTLKARGLAVTRLARGVPVGGELEYVDAGTIARAMLDRRTM</sequence>
<comment type="function">
    <text evidence="1">May play a role in DNA repair. It seems to be involved in an RecBC-independent recombinational process of DNA repair. It may act with RecF and RecO.</text>
</comment>
<comment type="similarity">
    <text evidence="1">Belongs to the RecR family.</text>
</comment>
<protein>
    <recommendedName>
        <fullName evidence="1">Recombination protein RecR</fullName>
    </recommendedName>
</protein>
<accession>Q0BEV4</accession>
<organism>
    <name type="scientific">Burkholderia ambifaria (strain ATCC BAA-244 / DSM 16087 / CCUG 44356 / LMG 19182 / AMMD)</name>
    <name type="common">Burkholderia cepacia (strain AMMD)</name>
    <dbReference type="NCBI Taxonomy" id="339670"/>
    <lineage>
        <taxon>Bacteria</taxon>
        <taxon>Pseudomonadati</taxon>
        <taxon>Pseudomonadota</taxon>
        <taxon>Betaproteobacteria</taxon>
        <taxon>Burkholderiales</taxon>
        <taxon>Burkholderiaceae</taxon>
        <taxon>Burkholderia</taxon>
        <taxon>Burkholderia cepacia complex</taxon>
    </lineage>
</organism>
<proteinExistence type="inferred from homology"/>
<reference key="1">
    <citation type="submission" date="2006-08" db="EMBL/GenBank/DDBJ databases">
        <title>Complete sequence of chromosome 1 of Burkholderia cepacia AMMD.</title>
        <authorList>
            <person name="Copeland A."/>
            <person name="Lucas S."/>
            <person name="Lapidus A."/>
            <person name="Barry K."/>
            <person name="Detter J.C."/>
            <person name="Glavina del Rio T."/>
            <person name="Hammon N."/>
            <person name="Israni S."/>
            <person name="Pitluck S."/>
            <person name="Bruce D."/>
            <person name="Chain P."/>
            <person name="Malfatti S."/>
            <person name="Shin M."/>
            <person name="Vergez L."/>
            <person name="Schmutz J."/>
            <person name="Larimer F."/>
            <person name="Land M."/>
            <person name="Hauser L."/>
            <person name="Kyrpides N."/>
            <person name="Kim E."/>
            <person name="Parke J."/>
            <person name="Coenye T."/>
            <person name="Konstantinidis K."/>
            <person name="Ramette A."/>
            <person name="Tiedje J."/>
            <person name="Richardson P."/>
        </authorList>
    </citation>
    <scope>NUCLEOTIDE SEQUENCE [LARGE SCALE GENOMIC DNA]</scope>
    <source>
        <strain>ATCC BAA-244 / DSM 16087 / CCUG 44356 / LMG 19182 / AMMD</strain>
    </source>
</reference>